<gene>
    <name evidence="1" type="primary">fmt</name>
    <name type="ordered locus">Bamb_3181</name>
</gene>
<organism>
    <name type="scientific">Burkholderia ambifaria (strain ATCC BAA-244 / DSM 16087 / CCUG 44356 / LMG 19182 / AMMD)</name>
    <name type="common">Burkholderia cepacia (strain AMMD)</name>
    <dbReference type="NCBI Taxonomy" id="339670"/>
    <lineage>
        <taxon>Bacteria</taxon>
        <taxon>Pseudomonadati</taxon>
        <taxon>Pseudomonadota</taxon>
        <taxon>Betaproteobacteria</taxon>
        <taxon>Burkholderiales</taxon>
        <taxon>Burkholderiaceae</taxon>
        <taxon>Burkholderia</taxon>
        <taxon>Burkholderia cepacia complex</taxon>
    </lineage>
</organism>
<dbReference type="EC" id="2.1.2.9" evidence="1"/>
<dbReference type="EMBL" id="CP000440">
    <property type="protein sequence ID" value="ABI88737.1"/>
    <property type="molecule type" value="Genomic_DNA"/>
</dbReference>
<dbReference type="RefSeq" id="WP_011658235.1">
    <property type="nucleotide sequence ID" value="NC_008390.1"/>
</dbReference>
<dbReference type="SMR" id="Q0BAT6"/>
<dbReference type="GeneID" id="93084626"/>
<dbReference type="KEGG" id="bam:Bamb_3181"/>
<dbReference type="PATRIC" id="fig|339670.21.peg.1678"/>
<dbReference type="eggNOG" id="COG0223">
    <property type="taxonomic scope" value="Bacteria"/>
</dbReference>
<dbReference type="Proteomes" id="UP000000662">
    <property type="component" value="Chromosome 1"/>
</dbReference>
<dbReference type="GO" id="GO:0005829">
    <property type="term" value="C:cytosol"/>
    <property type="evidence" value="ECO:0007669"/>
    <property type="project" value="TreeGrafter"/>
</dbReference>
<dbReference type="GO" id="GO:0004479">
    <property type="term" value="F:methionyl-tRNA formyltransferase activity"/>
    <property type="evidence" value="ECO:0007669"/>
    <property type="project" value="UniProtKB-UniRule"/>
</dbReference>
<dbReference type="CDD" id="cd08646">
    <property type="entry name" value="FMT_core_Met-tRNA-FMT_N"/>
    <property type="match status" value="1"/>
</dbReference>
<dbReference type="CDD" id="cd08704">
    <property type="entry name" value="Met_tRNA_FMT_C"/>
    <property type="match status" value="1"/>
</dbReference>
<dbReference type="FunFam" id="3.40.50.12230:FF:000001">
    <property type="entry name" value="Methionyl-tRNA formyltransferase"/>
    <property type="match status" value="1"/>
</dbReference>
<dbReference type="Gene3D" id="3.10.25.10">
    <property type="entry name" value="Formyl transferase, C-terminal domain"/>
    <property type="match status" value="1"/>
</dbReference>
<dbReference type="Gene3D" id="3.40.50.170">
    <property type="entry name" value="Formyl transferase, N-terminal domain"/>
    <property type="match status" value="1"/>
</dbReference>
<dbReference type="HAMAP" id="MF_00182">
    <property type="entry name" value="Formyl_trans"/>
    <property type="match status" value="1"/>
</dbReference>
<dbReference type="InterPro" id="IPR005794">
    <property type="entry name" value="Fmt"/>
</dbReference>
<dbReference type="InterPro" id="IPR005793">
    <property type="entry name" value="Formyl_trans_C"/>
</dbReference>
<dbReference type="InterPro" id="IPR037022">
    <property type="entry name" value="Formyl_trans_C_sf"/>
</dbReference>
<dbReference type="InterPro" id="IPR002376">
    <property type="entry name" value="Formyl_transf_N"/>
</dbReference>
<dbReference type="InterPro" id="IPR036477">
    <property type="entry name" value="Formyl_transf_N_sf"/>
</dbReference>
<dbReference type="InterPro" id="IPR011034">
    <property type="entry name" value="Formyl_transferase-like_C_sf"/>
</dbReference>
<dbReference type="InterPro" id="IPR001555">
    <property type="entry name" value="GART_AS"/>
</dbReference>
<dbReference type="InterPro" id="IPR044135">
    <property type="entry name" value="Met-tRNA-FMT_C"/>
</dbReference>
<dbReference type="InterPro" id="IPR041711">
    <property type="entry name" value="Met-tRNA-FMT_N"/>
</dbReference>
<dbReference type="NCBIfam" id="TIGR00460">
    <property type="entry name" value="fmt"/>
    <property type="match status" value="1"/>
</dbReference>
<dbReference type="PANTHER" id="PTHR11138">
    <property type="entry name" value="METHIONYL-TRNA FORMYLTRANSFERASE"/>
    <property type="match status" value="1"/>
</dbReference>
<dbReference type="PANTHER" id="PTHR11138:SF5">
    <property type="entry name" value="METHIONYL-TRNA FORMYLTRANSFERASE, MITOCHONDRIAL"/>
    <property type="match status" value="1"/>
</dbReference>
<dbReference type="Pfam" id="PF02911">
    <property type="entry name" value="Formyl_trans_C"/>
    <property type="match status" value="1"/>
</dbReference>
<dbReference type="Pfam" id="PF00551">
    <property type="entry name" value="Formyl_trans_N"/>
    <property type="match status" value="1"/>
</dbReference>
<dbReference type="SUPFAM" id="SSF50486">
    <property type="entry name" value="FMT C-terminal domain-like"/>
    <property type="match status" value="1"/>
</dbReference>
<dbReference type="SUPFAM" id="SSF53328">
    <property type="entry name" value="Formyltransferase"/>
    <property type="match status" value="1"/>
</dbReference>
<dbReference type="PROSITE" id="PS00373">
    <property type="entry name" value="GART"/>
    <property type="match status" value="1"/>
</dbReference>
<protein>
    <recommendedName>
        <fullName evidence="1">Methionyl-tRNA formyltransferase</fullName>
        <ecNumber evidence="1">2.1.2.9</ecNumber>
    </recommendedName>
</protein>
<comment type="function">
    <text evidence="1">Attaches a formyl group to the free amino group of methionyl-tRNA(fMet). The formyl group appears to play a dual role in the initiator identity of N-formylmethionyl-tRNA by promoting its recognition by IF2 and preventing the misappropriation of this tRNA by the elongation apparatus.</text>
</comment>
<comment type="catalytic activity">
    <reaction evidence="1">
        <text>L-methionyl-tRNA(fMet) + (6R)-10-formyltetrahydrofolate = N-formyl-L-methionyl-tRNA(fMet) + (6S)-5,6,7,8-tetrahydrofolate + H(+)</text>
        <dbReference type="Rhea" id="RHEA:24380"/>
        <dbReference type="Rhea" id="RHEA-COMP:9952"/>
        <dbReference type="Rhea" id="RHEA-COMP:9953"/>
        <dbReference type="ChEBI" id="CHEBI:15378"/>
        <dbReference type="ChEBI" id="CHEBI:57453"/>
        <dbReference type="ChEBI" id="CHEBI:78530"/>
        <dbReference type="ChEBI" id="CHEBI:78844"/>
        <dbReference type="ChEBI" id="CHEBI:195366"/>
        <dbReference type="EC" id="2.1.2.9"/>
    </reaction>
</comment>
<comment type="similarity">
    <text evidence="1">Belongs to the Fmt family.</text>
</comment>
<accession>Q0BAT6</accession>
<keyword id="KW-0648">Protein biosynthesis</keyword>
<keyword id="KW-0808">Transferase</keyword>
<proteinExistence type="inferred from homology"/>
<reference key="1">
    <citation type="submission" date="2006-08" db="EMBL/GenBank/DDBJ databases">
        <title>Complete sequence of chromosome 1 of Burkholderia cepacia AMMD.</title>
        <authorList>
            <person name="Copeland A."/>
            <person name="Lucas S."/>
            <person name="Lapidus A."/>
            <person name="Barry K."/>
            <person name="Detter J.C."/>
            <person name="Glavina del Rio T."/>
            <person name="Hammon N."/>
            <person name="Israni S."/>
            <person name="Pitluck S."/>
            <person name="Bruce D."/>
            <person name="Chain P."/>
            <person name="Malfatti S."/>
            <person name="Shin M."/>
            <person name="Vergez L."/>
            <person name="Schmutz J."/>
            <person name="Larimer F."/>
            <person name="Land M."/>
            <person name="Hauser L."/>
            <person name="Kyrpides N."/>
            <person name="Kim E."/>
            <person name="Parke J."/>
            <person name="Coenye T."/>
            <person name="Konstantinidis K."/>
            <person name="Ramette A."/>
            <person name="Tiedje J."/>
            <person name="Richardson P."/>
        </authorList>
    </citation>
    <scope>NUCLEOTIDE SEQUENCE [LARGE SCALE GENOMIC DNA]</scope>
    <source>
        <strain>ATCC BAA-244 / DSM 16087 / CCUG 44356 / LMG 19182 / AMMD</strain>
    </source>
</reference>
<sequence>MTHTLRVIFAGTPEFAAAALAAIHEAGFPVPLVLTQPDRPAGRGMKLQASAVKRYAVEHGMPVAQPPSLRRAGKYPAEAADAIELLRTTPHDVMVVAAYGLLLPQEVLDIPRAGCINIHASLLPRWRGAAPIHRAIEAGDAETGVTLMQMDVGLDTGAMIDEARVAIAPDDTTATLHDRLAADGARLIVDALVRLERDGALPATPQPADGVTYAEKIGKHEAALDWRKPADVLARQVRAFDPFPGGVATLDGAAIKLWAAEPVAARGDAAPGTIVDAAPEGVIVACGSGALRVTQLQKPGGKRLPAREFLAGSPLAAGQRFALPDGA</sequence>
<feature type="chain" id="PRO_1000020032" description="Methionyl-tRNA formyltransferase">
    <location>
        <begin position="1"/>
        <end position="327"/>
    </location>
</feature>
<feature type="binding site" evidence="1">
    <location>
        <begin position="121"/>
        <end position="124"/>
    </location>
    <ligand>
        <name>(6S)-5,6,7,8-tetrahydrofolate</name>
        <dbReference type="ChEBI" id="CHEBI:57453"/>
    </ligand>
</feature>
<name>FMT_BURCM</name>
<evidence type="ECO:0000255" key="1">
    <source>
        <dbReference type="HAMAP-Rule" id="MF_00182"/>
    </source>
</evidence>